<dbReference type="EC" id="2.3.1.-" evidence="1"/>
<dbReference type="EC" id="2.3.1.51" evidence="4"/>
<dbReference type="EMBL" id="AY358702">
    <property type="protein sequence ID" value="AAQ89065.1"/>
    <property type="molecule type" value="mRNA"/>
</dbReference>
<dbReference type="EMBL" id="AK095284">
    <property type="protein sequence ID" value="BAC04522.1"/>
    <property type="molecule type" value="mRNA"/>
</dbReference>
<dbReference type="EMBL" id="AC073255">
    <property type="status" value="NOT_ANNOTATED_CDS"/>
    <property type="molecule type" value="Genomic_DNA"/>
</dbReference>
<dbReference type="EMBL" id="AC132154">
    <property type="status" value="NOT_ANNOTATED_CDS"/>
    <property type="molecule type" value="Genomic_DNA"/>
</dbReference>
<dbReference type="EMBL" id="BC146817">
    <property type="protein sequence ID" value="AAI46818.1"/>
    <property type="molecule type" value="mRNA"/>
</dbReference>
<dbReference type="CCDS" id="CCDS1772.1">
    <molecule id="Q6UWP7-1"/>
</dbReference>
<dbReference type="CCDS" id="CCDS42670.1">
    <molecule id="Q6UWP7-3"/>
</dbReference>
<dbReference type="RefSeq" id="NP_001002257.1">
    <molecule id="Q6UWP7-3"/>
    <property type="nucleotide sequence ID" value="NM_001002257.3"/>
</dbReference>
<dbReference type="RefSeq" id="NP_001291374.1">
    <molecule id="Q6UWP7-3"/>
    <property type="nucleotide sequence ID" value="NM_001304445.2"/>
</dbReference>
<dbReference type="RefSeq" id="NP_872357.2">
    <molecule id="Q6UWP7-1"/>
    <property type="nucleotide sequence ID" value="NM_182551.4"/>
</dbReference>
<dbReference type="RefSeq" id="XP_005264301.1">
    <molecule id="Q6UWP7-1"/>
    <property type="nucleotide sequence ID" value="XM_005264244.2"/>
</dbReference>
<dbReference type="RefSeq" id="XP_005264302.1">
    <molecule id="Q6UWP7-3"/>
    <property type="nucleotide sequence ID" value="XM_005264245.4"/>
</dbReference>
<dbReference type="RefSeq" id="XP_011531043.1">
    <molecule id="Q6UWP7-1"/>
    <property type="nucleotide sequence ID" value="XM_011532741.3"/>
</dbReference>
<dbReference type="RefSeq" id="XP_011531044.1">
    <property type="nucleotide sequence ID" value="XM_011532742.2"/>
</dbReference>
<dbReference type="RefSeq" id="XP_011531045.1">
    <property type="nucleotide sequence ID" value="XM_011532743.2"/>
</dbReference>
<dbReference type="RefSeq" id="XP_016859235.1">
    <molecule id="Q6UWP7-3"/>
    <property type="nucleotide sequence ID" value="XM_017003746.2"/>
</dbReference>
<dbReference type="RefSeq" id="XP_047299824.1">
    <molecule id="Q6UWP7-3"/>
    <property type="nucleotide sequence ID" value="XM_047443868.1"/>
</dbReference>
<dbReference type="RefSeq" id="XP_047299825.1">
    <molecule id="Q6UWP7-2"/>
    <property type="nucleotide sequence ID" value="XM_047443869.1"/>
</dbReference>
<dbReference type="RefSeq" id="XP_054197237.1">
    <molecule id="Q6UWP7-1"/>
    <property type="nucleotide sequence ID" value="XM_054341262.1"/>
</dbReference>
<dbReference type="RefSeq" id="XP_054197238.1">
    <molecule id="Q6UWP7-1"/>
    <property type="nucleotide sequence ID" value="XM_054341263.1"/>
</dbReference>
<dbReference type="RefSeq" id="XP_054197239.1">
    <molecule id="Q6UWP7-3"/>
    <property type="nucleotide sequence ID" value="XM_054341264.1"/>
</dbReference>
<dbReference type="RefSeq" id="XP_054197240.1">
    <molecule id="Q6UWP7-3"/>
    <property type="nucleotide sequence ID" value="XM_054341265.1"/>
</dbReference>
<dbReference type="RefSeq" id="XP_054197241.1">
    <molecule id="Q6UWP7-2"/>
    <property type="nucleotide sequence ID" value="XM_054341266.1"/>
</dbReference>
<dbReference type="RefSeq" id="XP_054197243.1">
    <molecule id="Q6UWP7-3"/>
    <property type="nucleotide sequence ID" value="XM_054341268.1"/>
</dbReference>
<dbReference type="BioGRID" id="128972">
    <property type="interactions" value="93"/>
</dbReference>
<dbReference type="FunCoup" id="Q6UWP7">
    <property type="interactions" value="2203"/>
</dbReference>
<dbReference type="IntAct" id="Q6UWP7">
    <property type="interactions" value="56"/>
</dbReference>
<dbReference type="MINT" id="Q6UWP7"/>
<dbReference type="STRING" id="9606.ENSP00000310551"/>
<dbReference type="BindingDB" id="Q6UWP7"/>
<dbReference type="ChEMBL" id="CHEMBL5169167"/>
<dbReference type="SwissLipids" id="SLP:000000126"/>
<dbReference type="GlyGen" id="Q6UWP7">
    <property type="glycosylation" value="1 site, 1 O-linked glycan (1 site)"/>
</dbReference>
<dbReference type="iPTMnet" id="Q6UWP7"/>
<dbReference type="PhosphoSitePlus" id="Q6UWP7"/>
<dbReference type="SwissPalm" id="Q6UWP7"/>
<dbReference type="BioMuta" id="LCLAT1"/>
<dbReference type="DMDM" id="74749398"/>
<dbReference type="jPOST" id="Q6UWP7"/>
<dbReference type="MassIVE" id="Q6UWP7"/>
<dbReference type="PaxDb" id="9606-ENSP00000310551"/>
<dbReference type="PeptideAtlas" id="Q6UWP7"/>
<dbReference type="ProteomicsDB" id="67509">
    <molecule id="Q6UWP7-1"/>
</dbReference>
<dbReference type="ProteomicsDB" id="67510">
    <molecule id="Q6UWP7-2"/>
</dbReference>
<dbReference type="ProteomicsDB" id="790"/>
<dbReference type="Pumba" id="Q6UWP7"/>
<dbReference type="TopDownProteomics" id="Q6UWP7-1">
    <molecule id="Q6UWP7-1"/>
</dbReference>
<dbReference type="Antibodypedia" id="28989">
    <property type="antibodies" value="91 antibodies from 19 providers"/>
</dbReference>
<dbReference type="DNASU" id="253558"/>
<dbReference type="Ensembl" id="ENST00000309052.8">
    <molecule id="Q6UWP7-1"/>
    <property type="protein sequence ID" value="ENSP00000310551.4"/>
    <property type="gene ID" value="ENSG00000172954.14"/>
</dbReference>
<dbReference type="Ensembl" id="ENST00000319406.8">
    <molecule id="Q6UWP7-2"/>
    <property type="protein sequence ID" value="ENSP00000368826.1"/>
    <property type="gene ID" value="ENSG00000172954.14"/>
</dbReference>
<dbReference type="Ensembl" id="ENST00000379509.8">
    <molecule id="Q6UWP7-3"/>
    <property type="protein sequence ID" value="ENSP00000368823.3"/>
    <property type="gene ID" value="ENSG00000172954.14"/>
</dbReference>
<dbReference type="GeneID" id="253558"/>
<dbReference type="KEGG" id="hsa:253558"/>
<dbReference type="MANE-Select" id="ENST00000379509.8">
    <molecule id="Q6UWP7-3"/>
    <property type="protein sequence ID" value="ENSP00000368823.3"/>
    <property type="RefSeq nucleotide sequence ID" value="NM_001002257.3"/>
    <property type="RefSeq protein sequence ID" value="NP_001002257.1"/>
</dbReference>
<dbReference type="UCSC" id="uc002rnj.3">
    <molecule id="Q6UWP7-1"/>
    <property type="organism name" value="human"/>
</dbReference>
<dbReference type="AGR" id="HGNC:26756"/>
<dbReference type="CTD" id="253558"/>
<dbReference type="DisGeNET" id="253558"/>
<dbReference type="GeneCards" id="LCLAT1"/>
<dbReference type="HGNC" id="HGNC:26756">
    <property type="gene designation" value="LCLAT1"/>
</dbReference>
<dbReference type="HPA" id="ENSG00000172954">
    <property type="expression patterns" value="Low tissue specificity"/>
</dbReference>
<dbReference type="neXtProt" id="NX_Q6UWP7"/>
<dbReference type="OpenTargets" id="ENSG00000172954"/>
<dbReference type="PharmGKB" id="PA164722072"/>
<dbReference type="VEuPathDB" id="HostDB:ENSG00000172954"/>
<dbReference type="eggNOG" id="KOG1505">
    <property type="taxonomic scope" value="Eukaryota"/>
</dbReference>
<dbReference type="GeneTree" id="ENSGT00950000182836"/>
<dbReference type="HOGENOM" id="CLU_041844_4_0_1"/>
<dbReference type="InParanoid" id="Q6UWP7"/>
<dbReference type="OrthoDB" id="186786at2759"/>
<dbReference type="PAN-GO" id="Q6UWP7">
    <property type="GO annotations" value="4 GO annotations based on evolutionary models"/>
</dbReference>
<dbReference type="PhylomeDB" id="Q6UWP7"/>
<dbReference type="TreeFam" id="TF314346"/>
<dbReference type="PathwayCommons" id="Q6UWP7"/>
<dbReference type="Reactome" id="R-HSA-1482798">
    <property type="pathway name" value="Acyl chain remodeling of CL"/>
</dbReference>
<dbReference type="Reactome" id="R-HSA-1483166">
    <property type="pathway name" value="Synthesis of PA"/>
</dbReference>
<dbReference type="SABIO-RK" id="Q6UWP7"/>
<dbReference type="SignaLink" id="Q6UWP7"/>
<dbReference type="UniPathway" id="UPA00557">
    <property type="reaction ID" value="UER00613"/>
</dbReference>
<dbReference type="BioGRID-ORCS" id="253558">
    <property type="hits" value="12 hits in 1154 CRISPR screens"/>
</dbReference>
<dbReference type="ChiTaRS" id="LCLAT1">
    <property type="organism name" value="human"/>
</dbReference>
<dbReference type="GenomeRNAi" id="253558"/>
<dbReference type="Pharos" id="Q6UWP7">
    <property type="development level" value="Tbio"/>
</dbReference>
<dbReference type="PRO" id="PR:Q6UWP7"/>
<dbReference type="Proteomes" id="UP000005640">
    <property type="component" value="Chromosome 2"/>
</dbReference>
<dbReference type="RNAct" id="Q6UWP7">
    <property type="molecule type" value="protein"/>
</dbReference>
<dbReference type="Bgee" id="ENSG00000172954">
    <property type="expression patterns" value="Expressed in left ventricle myocardium and 193 other cell types or tissues"/>
</dbReference>
<dbReference type="ExpressionAtlas" id="Q6UWP7">
    <property type="expression patterns" value="baseline and differential"/>
</dbReference>
<dbReference type="GO" id="GO:0005829">
    <property type="term" value="C:cytosol"/>
    <property type="evidence" value="ECO:0000314"/>
    <property type="project" value="HPA"/>
</dbReference>
<dbReference type="GO" id="GO:0012505">
    <property type="term" value="C:endomembrane system"/>
    <property type="evidence" value="ECO:0000318"/>
    <property type="project" value="GO_Central"/>
</dbReference>
<dbReference type="GO" id="GO:0005783">
    <property type="term" value="C:endoplasmic reticulum"/>
    <property type="evidence" value="ECO:0000314"/>
    <property type="project" value="HPA"/>
</dbReference>
<dbReference type="GO" id="GO:0005789">
    <property type="term" value="C:endoplasmic reticulum membrane"/>
    <property type="evidence" value="ECO:0000304"/>
    <property type="project" value="Reactome"/>
</dbReference>
<dbReference type="GO" id="GO:0016020">
    <property type="term" value="C:membrane"/>
    <property type="evidence" value="ECO:0007005"/>
    <property type="project" value="UniProtKB"/>
</dbReference>
<dbReference type="GO" id="GO:0003841">
    <property type="term" value="F:1-acylglycerol-3-phosphate O-acyltransferase activity"/>
    <property type="evidence" value="ECO:0000314"/>
    <property type="project" value="UniProtKB"/>
</dbReference>
<dbReference type="GO" id="GO:0016746">
    <property type="term" value="F:acyltransferase activity"/>
    <property type="evidence" value="ECO:0000318"/>
    <property type="project" value="GO_Central"/>
</dbReference>
<dbReference type="GO" id="GO:0008374">
    <property type="term" value="F:O-acyltransferase activity"/>
    <property type="evidence" value="ECO:0000304"/>
    <property type="project" value="Reactome"/>
</dbReference>
<dbReference type="GO" id="GO:0035965">
    <property type="term" value="P:cardiolipin acyl-chain remodeling"/>
    <property type="evidence" value="ECO:0000304"/>
    <property type="project" value="Reactome"/>
</dbReference>
<dbReference type="GO" id="GO:0016024">
    <property type="term" value="P:CDP-diacylglycerol biosynthetic process"/>
    <property type="evidence" value="ECO:0007669"/>
    <property type="project" value="UniProtKB-UniPathway"/>
</dbReference>
<dbReference type="GO" id="GO:0006654">
    <property type="term" value="P:phosphatidic acid biosynthetic process"/>
    <property type="evidence" value="ECO:0000304"/>
    <property type="project" value="Reactome"/>
</dbReference>
<dbReference type="GO" id="GO:0036149">
    <property type="term" value="P:phosphatidylinositol acyl-chain remodeling"/>
    <property type="evidence" value="ECO:0000318"/>
    <property type="project" value="GO_Central"/>
</dbReference>
<dbReference type="CDD" id="cd07990">
    <property type="entry name" value="LPLAT_LCLAT1-like"/>
    <property type="match status" value="1"/>
</dbReference>
<dbReference type="InterPro" id="IPR032098">
    <property type="entry name" value="Acyltransf_C"/>
</dbReference>
<dbReference type="InterPro" id="IPR002123">
    <property type="entry name" value="Plipid/glycerol_acylTrfase"/>
</dbReference>
<dbReference type="PANTHER" id="PTHR10983">
    <property type="entry name" value="1-ACYLGLYCEROL-3-PHOSPHATE ACYLTRANSFERASE-RELATED"/>
    <property type="match status" value="1"/>
</dbReference>
<dbReference type="PANTHER" id="PTHR10983:SF16">
    <property type="entry name" value="LYSOCARDIOLIPIN ACYLTRANSFERASE 1"/>
    <property type="match status" value="1"/>
</dbReference>
<dbReference type="Pfam" id="PF16076">
    <property type="entry name" value="Acyltransf_C"/>
    <property type="match status" value="1"/>
</dbReference>
<dbReference type="Pfam" id="PF01553">
    <property type="entry name" value="Acyltransferase"/>
    <property type="match status" value="1"/>
</dbReference>
<dbReference type="SMART" id="SM00563">
    <property type="entry name" value="PlsC"/>
    <property type="match status" value="1"/>
</dbReference>
<dbReference type="SUPFAM" id="SSF69593">
    <property type="entry name" value="Glycerol-3-phosphate (1)-acyltransferase"/>
    <property type="match status" value="1"/>
</dbReference>
<accession>Q6UWP7</accession>
<accession>A6H8Z7</accession>
<accession>Q8N1Q7</accession>
<proteinExistence type="evidence at protein level"/>
<feature type="chain" id="PRO_0000291577" description="Lysocardiolipin acyltransferase 1">
    <location>
        <begin position="1"/>
        <end position="414"/>
    </location>
</feature>
<feature type="transmembrane region" description="Helical" evidence="3">
    <location>
        <begin position="47"/>
        <end position="67"/>
    </location>
</feature>
<feature type="transmembrane region" description="Helical" evidence="3">
    <location>
        <begin position="86"/>
        <end position="106"/>
    </location>
</feature>
<feature type="transmembrane region" description="Helical" evidence="3">
    <location>
        <begin position="340"/>
        <end position="360"/>
    </location>
</feature>
<feature type="transmembrane region" description="Helical" evidence="3">
    <location>
        <begin position="362"/>
        <end position="382"/>
    </location>
</feature>
<feature type="short sequence motif" description="HXXXXD motif" evidence="2">
    <location>
        <begin position="123"/>
        <end position="128"/>
    </location>
</feature>
<feature type="modified residue" description="N6-acetyllysine" evidence="12">
    <location>
        <position position="221"/>
    </location>
</feature>
<feature type="splice variant" id="VSP_044307" description="In isoform 3." evidence="7">
    <location>
        <begin position="1"/>
        <end position="38"/>
    </location>
</feature>
<feature type="splice variant" id="VSP_026181" description="In isoform 2." evidence="6">
    <original>KNLDAVHDITVAYPHNIPQSEKHLLQGDFPREIHFHVHRYPIDTLPTSKEDLQLWCHKRW</original>
    <variation>RRQSEGSKGPLQGELQITAQGNQRGHKQMEKHSMLMDWKNQYREIGHTAQSNLQIQCYSH</variation>
    <location>
        <begin position="249"/>
        <end position="308"/>
    </location>
</feature>
<feature type="splice variant" id="VSP_026182" description="In isoform 2." evidence="6">
    <location>
        <begin position="309"/>
        <end position="414"/>
    </location>
</feature>
<feature type="sequence variant" id="VAR_032830" description="In dbSNP:rs12471868.">
    <original>I</original>
    <variation>V</variation>
    <location>
        <position position="290"/>
    </location>
</feature>
<feature type="mutagenesis site" description="Abolishes LPIAT and LPGAT activities." evidence="4 5">
    <original>D</original>
    <variation>C</variation>
    <location>
        <position position="206"/>
    </location>
</feature>
<feature type="mutagenesis site" description="Does not increase enzyme activity." evidence="4 5">
    <original>D</original>
    <variation>R</variation>
    <location>
        <position position="206"/>
    </location>
</feature>
<feature type="mutagenesis site" description="Abolishes LPIAT activity. No effect on LPGAT activity." evidence="5">
    <original>L</original>
    <variation>T</variation>
    <location>
        <position position="207"/>
    </location>
</feature>
<comment type="function">
    <text evidence="1 4 5">Exhibits acyl-CoA:lysocardiolipin acyltransferase (ALCAT) activity; catalyzes the reacylation of lyso-cardiolipin to cardiolipin (CL), a key step in CL remodeling (By similarity). Recognizes both monolysocardiolipin and dilysocardiolipin as substrates with a preference for linoleoyl-CoA and oleoyl-CoA as acyl donors (By similarity). Also exhibits 1-acyl-sn-glycerol-3-phosphate acyltransferase activity (AGPAT) activity; converts 1-acyl-sn-glycerol-3- phosphate (lysophosphatidic acid or LPA) into 1,2-diacyl-sn-glycerol-3- phosphate (phosphatidic acid or PA) by incorporating an acyl moiety at the sn-2 position of the glycerol backbone (PubMed:16620771). Possesses both lysophosphatidylinositol acyltransferase (LPIAT) and lysophosphatidylglycerol acyltransferase (LPGAT) activities (PubMed:19075029). Required for establishment of the hematopoietic and endothelial lineages (By similarity).</text>
</comment>
<comment type="catalytic activity">
    <reaction evidence="4">
        <text>a 1-acyl-sn-glycero-3-phosphate + an acyl-CoA = a 1,2-diacyl-sn-glycero-3-phosphate + CoA</text>
        <dbReference type="Rhea" id="RHEA:19709"/>
        <dbReference type="ChEBI" id="CHEBI:57287"/>
        <dbReference type="ChEBI" id="CHEBI:57970"/>
        <dbReference type="ChEBI" id="CHEBI:58342"/>
        <dbReference type="ChEBI" id="CHEBI:58608"/>
        <dbReference type="EC" id="2.3.1.51"/>
    </reaction>
    <physiologicalReaction direction="left-to-right" evidence="10">
        <dbReference type="Rhea" id="RHEA:19710"/>
    </physiologicalReaction>
</comment>
<comment type="catalytic activity">
    <reaction evidence="5">
        <text>a 1-acyl-sn-glycero-3-phospho-(1D-myo-inositol) + an acyl-CoA = a 1,2-diacyl-sn-glycero-3-phospho-(1D-myo-inositol) + CoA</text>
        <dbReference type="Rhea" id="RHEA:33195"/>
        <dbReference type="ChEBI" id="CHEBI:57287"/>
        <dbReference type="ChEBI" id="CHEBI:57880"/>
        <dbReference type="ChEBI" id="CHEBI:58342"/>
        <dbReference type="ChEBI" id="CHEBI:64771"/>
    </reaction>
    <physiologicalReaction direction="left-to-right" evidence="11">
        <dbReference type="Rhea" id="RHEA:33196"/>
    </physiologicalReaction>
</comment>
<comment type="catalytic activity">
    <reaction evidence="5">
        <text>1-acyl-sn-glycero-3-phospho-(1'-sn-glycerol) + an acyl-CoA = a 1,2-diacyl-sn-glycero-3-phospho-(1'-sn-glycerol) + CoA</text>
        <dbReference type="Rhea" id="RHEA:33203"/>
        <dbReference type="ChEBI" id="CHEBI:57287"/>
        <dbReference type="ChEBI" id="CHEBI:58342"/>
        <dbReference type="ChEBI" id="CHEBI:64716"/>
        <dbReference type="ChEBI" id="CHEBI:64840"/>
    </reaction>
    <physiologicalReaction direction="left-to-right" evidence="11">
        <dbReference type="Rhea" id="RHEA:33204"/>
    </physiologicalReaction>
</comment>
<comment type="catalytic activity">
    <reaction evidence="4">
        <text>1-hexadecanoyl-sn-glycero-3-phosphate + (9Z)-octadecenoyl-CoA = 1-hexadecanoyl-2-(9Z-octadecenoyl)-sn-glycero-3-phosphate + CoA</text>
        <dbReference type="Rhea" id="RHEA:33187"/>
        <dbReference type="ChEBI" id="CHEBI:57287"/>
        <dbReference type="ChEBI" id="CHEBI:57387"/>
        <dbReference type="ChEBI" id="CHEBI:57518"/>
        <dbReference type="ChEBI" id="CHEBI:64839"/>
    </reaction>
    <physiologicalReaction direction="left-to-right" evidence="10">
        <dbReference type="Rhea" id="RHEA:33188"/>
    </physiologicalReaction>
</comment>
<comment type="catalytic activity">
    <reaction evidence="4">
        <text>1-(9Z-octadecenoyl)-sn-glycero-3-phosphate + (9Z)-octadecenoyl-CoA = 1,2-di-(9Z-octadecenoyl)-sn-glycero-3-phosphate + CoA</text>
        <dbReference type="Rhea" id="RHEA:37131"/>
        <dbReference type="ChEBI" id="CHEBI:57287"/>
        <dbReference type="ChEBI" id="CHEBI:57387"/>
        <dbReference type="ChEBI" id="CHEBI:74544"/>
        <dbReference type="ChEBI" id="CHEBI:74546"/>
    </reaction>
    <physiologicalReaction direction="left-to-right" evidence="10">
        <dbReference type="Rhea" id="RHEA:37132"/>
    </physiologicalReaction>
</comment>
<comment type="catalytic activity">
    <reaction evidence="4">
        <text>1-(9Z,12Z)-octadecadienoyl-sn-glycero-3-phosphate + (9Z)-octadecenoyl-CoA = 1-(9Z,12Z)-octadecadienoyl-2-(9Z)-octadecenoyl-sn-glycero-3-phosphate + CoA</text>
        <dbReference type="Rhea" id="RHEA:37135"/>
        <dbReference type="ChEBI" id="CHEBI:57287"/>
        <dbReference type="ChEBI" id="CHEBI:57387"/>
        <dbReference type="ChEBI" id="CHEBI:74547"/>
        <dbReference type="ChEBI" id="CHEBI:74548"/>
    </reaction>
    <physiologicalReaction direction="left-to-right" evidence="10">
        <dbReference type="Rhea" id="RHEA:37136"/>
    </physiologicalReaction>
</comment>
<comment type="catalytic activity">
    <reaction evidence="4">
        <text>1-(9Z,12Z,15Z)-octadecatrienoyl-sn-glycero-3-phosphate + (9Z)-octadecenoyl-CoA = 1-(9Z,12Z,15Z)-octadecatrienoyl-2-(9Z)-octadecenoyl-sn-glycero-3-phosphate + CoA</text>
        <dbReference type="Rhea" id="RHEA:37139"/>
        <dbReference type="ChEBI" id="CHEBI:57287"/>
        <dbReference type="ChEBI" id="CHEBI:57387"/>
        <dbReference type="ChEBI" id="CHEBI:74549"/>
        <dbReference type="ChEBI" id="CHEBI:74550"/>
    </reaction>
    <physiologicalReaction direction="left-to-right" evidence="10">
        <dbReference type="Rhea" id="RHEA:37140"/>
    </physiologicalReaction>
</comment>
<comment type="catalytic activity">
    <reaction evidence="4">
        <text>1-(9Z-octadecenoyl)-sn-glycero-3-phosphate + hexadecanoyl-CoA = 1-(9Z)-octadecenoyl-2-hexadecanoyl-sn-glycero-3-phosphate + CoA</text>
        <dbReference type="Rhea" id="RHEA:37143"/>
        <dbReference type="ChEBI" id="CHEBI:57287"/>
        <dbReference type="ChEBI" id="CHEBI:57379"/>
        <dbReference type="ChEBI" id="CHEBI:74544"/>
        <dbReference type="ChEBI" id="CHEBI:74551"/>
    </reaction>
    <physiologicalReaction direction="left-to-right" evidence="10">
        <dbReference type="Rhea" id="RHEA:37144"/>
    </physiologicalReaction>
</comment>
<comment type="catalytic activity">
    <reaction evidence="4">
        <text>1-(9Z-octadecenoyl)-sn-glycero-3-phosphate + octadecanoyl-CoA = 1-(9Z-octadecenoyl)-2-octadecanoyl-sn-glycero-3-phosphate + CoA</text>
        <dbReference type="Rhea" id="RHEA:37147"/>
        <dbReference type="ChEBI" id="CHEBI:57287"/>
        <dbReference type="ChEBI" id="CHEBI:57394"/>
        <dbReference type="ChEBI" id="CHEBI:74544"/>
        <dbReference type="ChEBI" id="CHEBI:74552"/>
    </reaction>
    <physiologicalReaction direction="left-to-right" evidence="10">
        <dbReference type="Rhea" id="RHEA:37148"/>
    </physiologicalReaction>
</comment>
<comment type="catalytic activity">
    <reaction evidence="5">
        <text>1-acyl-sn-glycero-3-phospho-(1'-sn-glycerol) + (9Z)-octadecenoyl-CoA = 1-acyl-2-(9Z-octadecenoyl)-sn-glycero-3-phospho-(1'-sn-glycerol) + CoA</text>
        <dbReference type="Rhea" id="RHEA:37619"/>
        <dbReference type="ChEBI" id="CHEBI:57287"/>
        <dbReference type="ChEBI" id="CHEBI:57387"/>
        <dbReference type="ChEBI" id="CHEBI:64840"/>
        <dbReference type="ChEBI" id="CHEBI:75173"/>
    </reaction>
    <physiologicalReaction direction="left-to-right" evidence="11">
        <dbReference type="Rhea" id="RHEA:37620"/>
    </physiologicalReaction>
</comment>
<comment type="catalytic activity">
    <reaction evidence="5">
        <text>a 1-acyl-sn-glycero-3-phospho-(1D-myo-inositol) + (9Z)-octadecenoyl-CoA = a 1-acyl-2-(9Z-octadecenoyl)-sn-glycero-3-phospho-(1D-myo-inositol) + CoA</text>
        <dbReference type="Rhea" id="RHEA:37623"/>
        <dbReference type="ChEBI" id="CHEBI:57287"/>
        <dbReference type="ChEBI" id="CHEBI:57387"/>
        <dbReference type="ChEBI" id="CHEBI:64771"/>
        <dbReference type="ChEBI" id="CHEBI:75116"/>
    </reaction>
    <physiologicalReaction direction="left-to-right" evidence="11">
        <dbReference type="Rhea" id="RHEA:37624"/>
    </physiologicalReaction>
</comment>
<comment type="catalytic activity">
    <reaction evidence="5">
        <text>1-hexadecanoyl-sn-glycero-3-phospho-(1D-myo-inositol) + hexadecanoyl-CoA = 1,2-dihexadecanoyl-sn-glycero-3-phospho-(1D-myo-inositol) + CoA</text>
        <dbReference type="Rhea" id="RHEA:35871"/>
        <dbReference type="ChEBI" id="CHEBI:57287"/>
        <dbReference type="ChEBI" id="CHEBI:57379"/>
        <dbReference type="ChEBI" id="CHEBI:72833"/>
        <dbReference type="ChEBI" id="CHEBI:72835"/>
    </reaction>
    <physiologicalReaction direction="left-to-right" evidence="11">
        <dbReference type="Rhea" id="RHEA:35872"/>
    </physiologicalReaction>
</comment>
<comment type="catalytic activity">
    <reaction evidence="5">
        <text>1-hexadecanoyl-sn-glycero-3-phospho-(1D-myo-inositol) + octadecanoyl-CoA = 1-hexadecanoyl-2-octadecanoyl-sn-glycero-3-phospho-(1D-myo-inositol) + CoA</text>
        <dbReference type="Rhea" id="RHEA:35875"/>
        <dbReference type="ChEBI" id="CHEBI:57287"/>
        <dbReference type="ChEBI" id="CHEBI:57394"/>
        <dbReference type="ChEBI" id="CHEBI:72833"/>
        <dbReference type="ChEBI" id="CHEBI:72836"/>
    </reaction>
    <physiologicalReaction direction="left-to-right" evidence="11">
        <dbReference type="Rhea" id="RHEA:35876"/>
    </physiologicalReaction>
</comment>
<comment type="catalytic activity">
    <reaction evidence="5">
        <text>1-hexadecanoyl-sn-glycero-3-phospho-(1D-myo-inositol) + (9Z)-octadecenoyl-CoA = 1-hexadecanoyl-2-(9Z-octadecenoyl)-sn-glycero-3-phospho-(1D-myo-inositol) + CoA</text>
        <dbReference type="Rhea" id="RHEA:35879"/>
        <dbReference type="ChEBI" id="CHEBI:57287"/>
        <dbReference type="ChEBI" id="CHEBI:57387"/>
        <dbReference type="ChEBI" id="CHEBI:72833"/>
        <dbReference type="ChEBI" id="CHEBI:72837"/>
    </reaction>
    <physiologicalReaction direction="left-to-right" evidence="11">
        <dbReference type="Rhea" id="RHEA:35880"/>
    </physiologicalReaction>
</comment>
<comment type="catalytic activity">
    <reaction evidence="5">
        <text>1-hexadecanoyl-sn-glycero-3-phospho-(1D-myo-inositol) + (9Z,12Z)-octadecadienoyl-CoA = 1-hexadecanoyl-2-(9Z,12Z-octadecadienoyl)-sn-glycero-3-phospho-(1D-myo-inositol) + CoA</text>
        <dbReference type="Rhea" id="RHEA:35883"/>
        <dbReference type="ChEBI" id="CHEBI:57287"/>
        <dbReference type="ChEBI" id="CHEBI:57383"/>
        <dbReference type="ChEBI" id="CHEBI:72833"/>
        <dbReference type="ChEBI" id="CHEBI:72838"/>
    </reaction>
    <physiologicalReaction direction="left-to-right" evidence="11">
        <dbReference type="Rhea" id="RHEA:35884"/>
    </physiologicalReaction>
</comment>
<comment type="catalytic activity">
    <reaction evidence="5">
        <text>1-hexadecanoyl-sn-glycero-3-phospho-(1D-myo-inositol) + (5Z,8Z,11Z,14Z)-eicosatetraenoyl-CoA = 1-hexadecanoyl-2-(5Z,8Z,11Z,14Z-eicosatetraenoyl)-sn-glycero-3-phospho-D-myo-inositol + CoA</text>
        <dbReference type="Rhea" id="RHEA:35867"/>
        <dbReference type="ChEBI" id="CHEBI:57287"/>
        <dbReference type="ChEBI" id="CHEBI:57368"/>
        <dbReference type="ChEBI" id="CHEBI:72833"/>
        <dbReference type="ChEBI" id="CHEBI:72834"/>
    </reaction>
    <physiologicalReaction direction="left-to-right" evidence="11">
        <dbReference type="Rhea" id="RHEA:35868"/>
    </physiologicalReaction>
</comment>
<comment type="catalytic activity">
    <reaction evidence="5">
        <text>1-hexadecanoyl-sn-glycero-3-phospho-(1'-sn-glycerol) + hexadecanoyl-CoA = 1,2-dihexadecanoyl-sn-glycero-3-phospho-(1'-sn-glycerol) + CoA</text>
        <dbReference type="Rhea" id="RHEA:35851"/>
        <dbReference type="ChEBI" id="CHEBI:57287"/>
        <dbReference type="ChEBI" id="CHEBI:57379"/>
        <dbReference type="ChEBI" id="CHEBI:72829"/>
        <dbReference type="ChEBI" id="CHEBI:75158"/>
    </reaction>
    <physiologicalReaction direction="left-to-right" evidence="11">
        <dbReference type="Rhea" id="RHEA:35852"/>
    </physiologicalReaction>
</comment>
<comment type="catalytic activity">
    <reaction evidence="5">
        <text>1-hexadecanoyl-sn-glycero-3-phospho-(1'-sn-glycerol) + octadecanoyl-CoA = 1-hexadecanoyl-2-octadecanoyl-sn-glycero-3-phospho-(1'-sn-glycerol) + CoA</text>
        <dbReference type="Rhea" id="RHEA:35887"/>
        <dbReference type="ChEBI" id="CHEBI:57287"/>
        <dbReference type="ChEBI" id="CHEBI:57394"/>
        <dbReference type="ChEBI" id="CHEBI:72839"/>
        <dbReference type="ChEBI" id="CHEBI:75158"/>
    </reaction>
    <physiologicalReaction direction="left-to-right" evidence="11">
        <dbReference type="Rhea" id="RHEA:35888"/>
    </physiologicalReaction>
</comment>
<comment type="catalytic activity">
    <reaction evidence="5">
        <text>1-hexadecanoyl-sn-glycero-3-phospho-(1'-sn-glycerol) + (9Z)-octadecenoyl-CoA = 1-hexadecanoyl-2-(9Z-octadecenoyl)-sn-glycero-3-phospho-(1'-sn-glycerol) + CoA</text>
        <dbReference type="Rhea" id="RHEA:35891"/>
        <dbReference type="ChEBI" id="CHEBI:57287"/>
        <dbReference type="ChEBI" id="CHEBI:57387"/>
        <dbReference type="ChEBI" id="CHEBI:72841"/>
        <dbReference type="ChEBI" id="CHEBI:75158"/>
    </reaction>
    <physiologicalReaction direction="left-to-right" evidence="11">
        <dbReference type="Rhea" id="RHEA:35892"/>
    </physiologicalReaction>
</comment>
<comment type="catalytic activity">
    <reaction evidence="5">
        <text>1-hexadecanoyl-sn-glycero-3-phospho-(1'-sn-glycerol) + (9Z,12Z)-octadecadienoyl-CoA = 1-hexadecanoyl-2-(9Z,12Z-octadecadienoyl)-sn-glycero-3-phospho-(1'-sn-glycerol) + CoA</text>
        <dbReference type="Rhea" id="RHEA:35895"/>
        <dbReference type="ChEBI" id="CHEBI:57287"/>
        <dbReference type="ChEBI" id="CHEBI:57383"/>
        <dbReference type="ChEBI" id="CHEBI:72840"/>
        <dbReference type="ChEBI" id="CHEBI:75158"/>
    </reaction>
    <physiologicalReaction direction="left-to-right" evidence="11">
        <dbReference type="Rhea" id="RHEA:35896"/>
    </physiologicalReaction>
</comment>
<comment type="catalytic activity">
    <reaction evidence="5">
        <text>1-tetradecanoyl-sn-glycero-3-phospho-(1'-sn-glycerol) + (9Z)-octadecenoyl-CoA = 1-tetradecanoyl-2-(9Z-octadecenoyl)-sn-glycero-3-phospho-(1'-sn-glycerol) + CoA</text>
        <dbReference type="Rhea" id="RHEA:37643"/>
        <dbReference type="ChEBI" id="CHEBI:57287"/>
        <dbReference type="ChEBI" id="CHEBI:57387"/>
        <dbReference type="ChEBI" id="CHEBI:72826"/>
        <dbReference type="ChEBI" id="CHEBI:75161"/>
    </reaction>
    <physiologicalReaction direction="left-to-right" evidence="11">
        <dbReference type="Rhea" id="RHEA:37644"/>
    </physiologicalReaction>
</comment>
<comment type="catalytic activity">
    <reaction evidence="5">
        <text>1-octadecanoyl-sn-glycero-3-phospho-(1'-sn-glycerol) + (9Z)-octadecenoyl-CoA = 1-octadecanoyl-2-(9Z-octadecenoyl)-sn-glycero-3-phospho-(1'-sn-glycerol) + CoA</text>
        <dbReference type="Rhea" id="RHEA:37647"/>
        <dbReference type="ChEBI" id="CHEBI:57287"/>
        <dbReference type="ChEBI" id="CHEBI:57387"/>
        <dbReference type="ChEBI" id="CHEBI:72827"/>
        <dbReference type="ChEBI" id="CHEBI:72845"/>
    </reaction>
    <physiologicalReaction direction="left-to-right" evidence="11">
        <dbReference type="Rhea" id="RHEA:37648"/>
    </physiologicalReaction>
</comment>
<comment type="catalytic activity">
    <reaction evidence="5">
        <text>1-(9Z-octadecenoyl)-sn-glycero-3-phospho-(1'-sn-glycerol) + (9Z)-octadecenoyl-CoA = 1,2-di-(9Z-octadecenoyl)-sn-glycero-3-phospho-(1'-sn-glycerol) + CoA</text>
        <dbReference type="Rhea" id="RHEA:37651"/>
        <dbReference type="ChEBI" id="CHEBI:57287"/>
        <dbReference type="ChEBI" id="CHEBI:57387"/>
        <dbReference type="ChEBI" id="CHEBI:72828"/>
        <dbReference type="ChEBI" id="CHEBI:75163"/>
    </reaction>
    <physiologicalReaction direction="left-to-right" evidence="11">
        <dbReference type="Rhea" id="RHEA:37652"/>
    </physiologicalReaction>
</comment>
<comment type="catalytic activity">
    <reaction evidence="5">
        <text>1-hexadecanoyl-sn-glycero-3-phospho-(1D-myo-inositol) + dodecanoyl-CoA = 1-hexadecanoyl-2-dodecanoyl-sn-glycero-3-phospho-(1D-myo-inositol) + CoA</text>
        <dbReference type="Rhea" id="RHEA:37639"/>
        <dbReference type="ChEBI" id="CHEBI:57287"/>
        <dbReference type="ChEBI" id="CHEBI:57375"/>
        <dbReference type="ChEBI" id="CHEBI:72833"/>
        <dbReference type="ChEBI" id="CHEBI:75160"/>
    </reaction>
    <physiologicalReaction direction="left-to-right" evidence="11">
        <dbReference type="Rhea" id="RHEA:37640"/>
    </physiologicalReaction>
</comment>
<comment type="catalytic activity">
    <reaction evidence="1">
        <text>1',3'-bis-[1-acyl-sn-glycero-3-phospho]-glycerol + (9Z)-octadecenoyl-CoA = 1'-[1-acyl-2-(9Z)-octadecenoyl-sn-glycero-3-phospho],3'-[1-acyl,2-hydroxy-sn-glycero-3-phospho]-glycerol + CoA</text>
        <dbReference type="Rhea" id="RHEA:37615"/>
        <dbReference type="ChEBI" id="CHEBI:57287"/>
        <dbReference type="ChEBI" id="CHEBI:57387"/>
        <dbReference type="ChEBI" id="CHEBI:75137"/>
        <dbReference type="ChEBI" id="CHEBI:75139"/>
    </reaction>
    <physiologicalReaction direction="left-to-right" evidence="1">
        <dbReference type="Rhea" id="RHEA:37616"/>
    </physiologicalReaction>
</comment>
<comment type="catalytic activity">
    <reaction evidence="1">
        <text>1'-[1,2-diacyl-sn-glycero-3-phospho],3'-[1-acyl-sn-glycero-3-phospho]-glycerol + (9Z)-octadecenoyl-CoA = 1'-[1,2-diacyl-sn-glycero-3-phospho],3'-[1-acyl,2-(9Z)-octadecenoyl-sn-glycero-3-phospho]-glycerol + CoA</text>
        <dbReference type="Rhea" id="RHEA:37611"/>
        <dbReference type="ChEBI" id="CHEBI:57287"/>
        <dbReference type="ChEBI" id="CHEBI:57387"/>
        <dbReference type="ChEBI" id="CHEBI:64743"/>
        <dbReference type="ChEBI" id="CHEBI:75140"/>
    </reaction>
    <physiologicalReaction direction="left-to-right" evidence="1">
        <dbReference type="Rhea" id="RHEA:37612"/>
    </physiologicalReaction>
</comment>
<comment type="catalytic activity">
    <reaction evidence="1">
        <text>1'-[1,2-diacyl-sn-glycero-3-phospho],3'-[1-acyl-sn-glycero-3-phospho]-glycerol + (9Z,12Z)-octadecadienoyl-CoA = 1'-[1,2-diacyl-sn-glycero-3-phospho],3'-[1-acyl,2-(9Z,12Z)-octadecadienoyl-sn-glycero-3-phospho]-glycerol + CoA</text>
        <dbReference type="Rhea" id="RHEA:37675"/>
        <dbReference type="ChEBI" id="CHEBI:57287"/>
        <dbReference type="ChEBI" id="CHEBI:57383"/>
        <dbReference type="ChEBI" id="CHEBI:64743"/>
        <dbReference type="ChEBI" id="CHEBI:75205"/>
    </reaction>
    <physiologicalReaction direction="left-to-right" evidence="1">
        <dbReference type="Rhea" id="RHEA:37676"/>
    </physiologicalReaction>
</comment>
<comment type="catalytic activity">
    <reaction evidence="1">
        <text>1'-[1,2-diacyl-sn-glycero-3-phospho],3'-[1-acyl-sn-glycero-3-phospho]-glycerol + dodecanoyl-CoA = 1'-[1,2-diacyl-sn-glycero-3-phospho],3'-[1-acyl,2-dodecanoyl-sn-glycero-3-phospho]-glycerol + CoA</text>
        <dbReference type="Rhea" id="RHEA:37679"/>
        <dbReference type="ChEBI" id="CHEBI:57287"/>
        <dbReference type="ChEBI" id="CHEBI:57375"/>
        <dbReference type="ChEBI" id="CHEBI:64743"/>
        <dbReference type="ChEBI" id="CHEBI:75203"/>
    </reaction>
    <physiologicalReaction direction="left-to-right" evidence="1">
        <dbReference type="Rhea" id="RHEA:37680"/>
    </physiologicalReaction>
</comment>
<comment type="catalytic activity">
    <reaction evidence="1">
        <text>1',3'-bis-[1-acyl-sn-glycero-3-phospho]-glycerol + dodecanoyl-CoA = 1'-[1-acyl-2-dodecanoyl-sn-glycero-3-phospho],3'-[1-acyl,2-hydroxy-sn-glycero-3-phospho]-glycerol + CoA</text>
        <dbReference type="Rhea" id="RHEA:37683"/>
        <dbReference type="ChEBI" id="CHEBI:57287"/>
        <dbReference type="ChEBI" id="CHEBI:57375"/>
        <dbReference type="ChEBI" id="CHEBI:75137"/>
        <dbReference type="ChEBI" id="CHEBI:75201"/>
    </reaction>
    <physiologicalReaction direction="left-to-right" evidence="1">
        <dbReference type="Rhea" id="RHEA:37684"/>
    </physiologicalReaction>
</comment>
<comment type="catalytic activity">
    <reaction evidence="1">
        <text>a 1-acyl-sn-glycero-3-phosphate + (9Z)-octadecenoyl-CoA = a 1-acyl-2-(9Z-octadecenoyl)-sn-glycero-3-phosphate + CoA</text>
        <dbReference type="Rhea" id="RHEA:37427"/>
        <dbReference type="ChEBI" id="CHEBI:57287"/>
        <dbReference type="ChEBI" id="CHEBI:57387"/>
        <dbReference type="ChEBI" id="CHEBI:57970"/>
        <dbReference type="ChEBI" id="CHEBI:74917"/>
    </reaction>
    <physiologicalReaction direction="left-to-right" evidence="1">
        <dbReference type="Rhea" id="RHEA:37428"/>
    </physiologicalReaction>
</comment>
<comment type="catalytic activity">
    <reaction evidence="1">
        <text>1',3'-bis-[1-acyl-sn-glycero-3-phospho]-glycerol + (9Z,12Z)-octadecadienoyl-CoA = 1'-[1-acyl-2-(9Z,12Z)-octadecadienoyl-sn-glycero-3-phospho],3'-[1-acyl,2-hydroxy-sn-glycero-3-phospho]-glycerol + CoA</text>
        <dbReference type="Rhea" id="RHEA:37687"/>
        <dbReference type="ChEBI" id="CHEBI:57287"/>
        <dbReference type="ChEBI" id="CHEBI:57383"/>
        <dbReference type="ChEBI" id="CHEBI:75137"/>
        <dbReference type="ChEBI" id="CHEBI:75209"/>
    </reaction>
    <physiologicalReaction direction="left-to-right" evidence="1">
        <dbReference type="Rhea" id="RHEA:37688"/>
    </physiologicalReaction>
</comment>
<comment type="catalytic activity">
    <reaction evidence="1">
        <text>1',3'-bis-[1-acyl-sn-glycero-3-phospho]-glycerol + hexadecanoyl-CoA = 1'-[1-acyl-2-hexadecanoyl-sn-glycero-3-phospho],3'-[1-acyl,2-hydroxy-sn-glycero-3-phospho]-glycerol + CoA</text>
        <dbReference type="Rhea" id="RHEA:37691"/>
        <dbReference type="ChEBI" id="CHEBI:57287"/>
        <dbReference type="ChEBI" id="CHEBI:57379"/>
        <dbReference type="ChEBI" id="CHEBI:75137"/>
        <dbReference type="ChEBI" id="CHEBI:75207"/>
    </reaction>
    <physiologicalReaction direction="left-to-right" evidence="1">
        <dbReference type="Rhea" id="RHEA:37692"/>
    </physiologicalReaction>
</comment>
<comment type="catalytic activity">
    <reaction evidence="1">
        <text>1',3'-bis-[1-acyl-sn-glycero-3-phospho]-glycerol + octadecanoyl-CoA = 1'-[1-acyl-2-octadecanoyl-sn-glycero-3-phospho],3'-[1-acyl,2-hydroxy-sn-glycero-3-phospho]-glycerol + CoA</text>
        <dbReference type="Rhea" id="RHEA:37695"/>
        <dbReference type="ChEBI" id="CHEBI:57287"/>
        <dbReference type="ChEBI" id="CHEBI:57394"/>
        <dbReference type="ChEBI" id="CHEBI:75137"/>
        <dbReference type="ChEBI" id="CHEBI:75208"/>
    </reaction>
    <physiologicalReaction direction="left-to-right" evidence="1">
        <dbReference type="Rhea" id="RHEA:37696"/>
    </physiologicalReaction>
</comment>
<comment type="catalytic activity">
    <reaction evidence="1">
        <text>1'-[1,2-diacyl-sn-glycero-3-phospho],3'-[1-acyl-sn-glycero-3-phospho]-glycerol + octanoyl-CoA = 1'-[1,2-diacyl-sn-glycero-3-phospho],3'-[1-acyl,2-octanoyl-sn-glycero-3-phospho]-glycerol + CoA</text>
        <dbReference type="Rhea" id="RHEA:38623"/>
        <dbReference type="ChEBI" id="CHEBI:57287"/>
        <dbReference type="ChEBI" id="CHEBI:57386"/>
        <dbReference type="ChEBI" id="CHEBI:64743"/>
        <dbReference type="ChEBI" id="CHEBI:75990"/>
    </reaction>
    <physiologicalReaction direction="left-to-right" evidence="1">
        <dbReference type="Rhea" id="RHEA:38624"/>
    </physiologicalReaction>
</comment>
<comment type="catalytic activity">
    <reaction evidence="1">
        <text>1',3'-bis-[1-acyl-sn-glycero-3-phospho]-glycerol + octanoyl-CoA = 1'-[1-acyl-2-octanoyl-sn-glycero-3-phospho],3'-[1-acyl,2-hydroxy-sn-glycero-3-phospho]-glycerol + CoA</text>
        <dbReference type="Rhea" id="RHEA:38627"/>
        <dbReference type="ChEBI" id="CHEBI:57287"/>
        <dbReference type="ChEBI" id="CHEBI:57386"/>
        <dbReference type="ChEBI" id="CHEBI:75137"/>
        <dbReference type="ChEBI" id="CHEBI:75993"/>
    </reaction>
    <physiologicalReaction direction="left-to-right" evidence="1">
        <dbReference type="Rhea" id="RHEA:38628"/>
    </physiologicalReaction>
</comment>
<comment type="catalytic activity">
    <reaction evidence="1">
        <text>1'-[1,2-diacyl-sn-glycero-3-phospho],3'-[1-acyl-sn-glycero-3-phospho]-glycerol + hexadecanoyl-CoA = 1'-[1,2-diacyl-sn-glycero-3-phospho],3'-[1-acyl,2-hexadecanoyl-sn-glycero-3-phospho]-glycerol + CoA</text>
        <dbReference type="Rhea" id="RHEA:38631"/>
        <dbReference type="ChEBI" id="CHEBI:57287"/>
        <dbReference type="ChEBI" id="CHEBI:57379"/>
        <dbReference type="ChEBI" id="CHEBI:64743"/>
        <dbReference type="ChEBI" id="CHEBI:75994"/>
    </reaction>
    <physiologicalReaction direction="left-to-right" evidence="1">
        <dbReference type="Rhea" id="RHEA:38632"/>
    </physiologicalReaction>
</comment>
<comment type="catalytic activity">
    <reaction evidence="1">
        <text>1'-[1,2-diacyl-sn-glycero-3-phospho],3'-[1-acyl-sn-glycero-3-phospho]-glycerol + (5Z,8Z,11Z,14Z)-eicosatetraenoyl-CoA = 1'-[1,2-diacyl-sn-glycero-3-phospho],3'-[1-acyl,2-(5Z,8Z,11Z,14Z)-eicosatetraenoyl-sn-glycero-3-phospho]-glycerol + CoA</text>
        <dbReference type="Rhea" id="RHEA:38635"/>
        <dbReference type="ChEBI" id="CHEBI:57287"/>
        <dbReference type="ChEBI" id="CHEBI:57368"/>
        <dbReference type="ChEBI" id="CHEBI:64743"/>
        <dbReference type="ChEBI" id="CHEBI:75995"/>
    </reaction>
    <physiologicalReaction direction="left-to-right" evidence="1">
        <dbReference type="Rhea" id="RHEA:38636"/>
    </physiologicalReaction>
</comment>
<comment type="catalytic activity">
    <reaction evidence="1">
        <text>1',3'-bis-[1-acyl-sn-glycero-3-phospho]-glycerol + (5Z,8Z,11Z,14Z)-eicosatetraenoyl-CoA = 1'-[1-acyl-2-(5Z,8Z,11Z,14Z)-eicosatetraenoyl-sn-glycero-3-phospho],3'-[1-acyl,2-hydroxy-sn-glycero-3-phospho]-glycerol + CoA</text>
        <dbReference type="Rhea" id="RHEA:38639"/>
        <dbReference type="ChEBI" id="CHEBI:57287"/>
        <dbReference type="ChEBI" id="CHEBI:57368"/>
        <dbReference type="ChEBI" id="CHEBI:75137"/>
        <dbReference type="ChEBI" id="CHEBI:75996"/>
    </reaction>
    <physiologicalReaction direction="left-to-right" evidence="1">
        <dbReference type="Rhea" id="RHEA:38640"/>
    </physiologicalReaction>
</comment>
<comment type="catalytic activity">
    <reaction evidence="1">
        <text>a 1-acyl-sn-glycero-3-phospho-(1D-myo-inositol) + octadecanoyl-CoA = a 1-acyl-2-octadecanoyl-sn-glycero-3-phospho-(1D-myo-inositol) + CoA</text>
        <dbReference type="Rhea" id="RHEA:43960"/>
        <dbReference type="ChEBI" id="CHEBI:57287"/>
        <dbReference type="ChEBI" id="CHEBI:57394"/>
        <dbReference type="ChEBI" id="CHEBI:64771"/>
        <dbReference type="ChEBI" id="CHEBI:83939"/>
    </reaction>
    <physiologicalReaction direction="left-to-right" evidence="1">
        <dbReference type="Rhea" id="RHEA:43961"/>
    </physiologicalReaction>
</comment>
<comment type="catalytic activity">
    <reaction evidence="1">
        <text>a 2-acyl-sn-glycero-3-phospho-D-myo-inositol + octadecanoyl-CoA = 1-octadecanoyl-2-acyl-sn-glycero-3-phospho-1D-myo-inositol + CoA</text>
        <dbReference type="Rhea" id="RHEA:43964"/>
        <dbReference type="ChEBI" id="CHEBI:57287"/>
        <dbReference type="ChEBI" id="CHEBI:57394"/>
        <dbReference type="ChEBI" id="CHEBI:64872"/>
        <dbReference type="ChEBI" id="CHEBI:65055"/>
    </reaction>
    <physiologicalReaction direction="left-to-right" evidence="1">
        <dbReference type="Rhea" id="RHEA:43965"/>
    </physiologicalReaction>
</comment>
<comment type="biophysicochemical properties">
    <kinetics>
        <KM evidence="5">39 uM for arachidonoyl-CoA (20:4) for LPIAT activity</KM>
        <KM evidence="5">289 uM for oleoyl-CoA (18:1) for LPIAT activity</KM>
        <KM evidence="5">134 uM for linoleoyl-CoA (18:2) for LPIAT activity</KM>
        <KM evidence="5">34 uM for stearoyl-CoA (18:0) for LPIAT activity</KM>
        <KM evidence="5">53 uM for palmitoyl-CoA (16:0) for LPIAT activity</KM>
        <KM evidence="5">54 uM for oleoyl-CoA (18:1) for LPGAT activity</KM>
        <KM evidence="5">36 uM for linoleoyl-CoA (18:2) for LPGAT activity</KM>
        <KM evidence="5">70 uM for stearoyl-CoA (18:0) for LPGAT activity</KM>
        <KM evidence="5">34 uM for palmitoyl-CoA (16:0) for LPGAT activity</KM>
        <Vmax evidence="5">3230.0 nmol/min/mg enzyme toward arachidonoyl-CoA (20:4) for LPIAT activity</Vmax>
        <Vmax evidence="5">7489.0 nmol/min/mg enzyme toward oleoyl-CoA (18:1) for LPIAT activity</Vmax>
        <Vmax evidence="5">4696.0 nmol/min/mg enzyme toward linoleoyl-CoA (18:2) for LPIAT activity</Vmax>
        <Vmax evidence="5">1078.0 nmol/min/mg enzyme toward stearoyl-CoA (18:0) for LPIAT activity</Vmax>
        <Vmax evidence="5">11203.0 nmol/min/mg enzyme toward palmitoyl-CoA (16:0) for LPIAT activity</Vmax>
        <Vmax evidence="5">5514.0 nmol/min/mg enzyme toward oleoyl-CoA (18:1) for LPGAT activity</Vmax>
        <Vmax evidence="5">1358.0 nmol/min/mg enzyme toward linoleoyl-CoA (18:2) for LPGAT activity</Vmax>
        <Vmax evidence="5">3530.0 nmol/min/mg enzyme toward stearoyl-CoA (18:0) for LPGAT activity</Vmax>
        <Vmax evidence="5">1673.0 nmol/min/mg enzyme toward palmitoyl-CoA (16:0) for LPGAT activity</Vmax>
    </kinetics>
</comment>
<comment type="pathway">
    <text>Phospholipid metabolism; CDP-diacylglycerol biosynthesis; CDP-diacylglycerol from sn-glycerol 3-phosphate: step 2/3.</text>
</comment>
<comment type="interaction">
    <interactant intactId="EBI-10254507">
        <id>Q6UWP7</id>
    </interactant>
    <interactant intactId="EBI-349832">
        <id>Q9HD26</id>
        <label>GOPC</label>
    </interactant>
    <organismsDiffer>false</organismsDiffer>
    <experiments>3</experiments>
</comment>
<comment type="interaction">
    <interactant intactId="EBI-10254507">
        <id>Q6UWP7</id>
    </interactant>
    <interactant intactId="EBI-739832">
        <id>Q8TBB1</id>
        <label>LNX1</label>
    </interactant>
    <organismsDiffer>false</organismsDiffer>
    <experiments>3</experiments>
</comment>
<comment type="interaction">
    <interactant intactId="EBI-10254507">
        <id>Q6UWP7</id>
    </interactant>
    <interactant intactId="EBI-79165">
        <id>Q9NRD5</id>
        <label>PICK1</label>
    </interactant>
    <organismsDiffer>false</organismsDiffer>
    <experiments>3</experiments>
</comment>
<comment type="subcellular location">
    <subcellularLocation>
        <location evidence="5">Endoplasmic reticulum membrane</location>
        <topology evidence="3">Multi-pass membrane protein</topology>
    </subcellularLocation>
</comment>
<comment type="alternative products">
    <event type="alternative splicing"/>
    <isoform>
        <id>Q6UWP7-1</id>
        <name>1</name>
        <sequence type="displayed"/>
    </isoform>
    <isoform>
        <id>Q6UWP7-2</id>
        <name>2</name>
        <sequence type="described" ref="VSP_026181 VSP_026182"/>
    </isoform>
    <isoform>
        <id>Q6UWP7-3</id>
        <name>3</name>
        <sequence type="described" ref="VSP_044307"/>
    </isoform>
</comment>
<comment type="tissue specificity">
    <text evidence="4 5">Expressed at higher level in heart, kidney and pancreas than in brain, spleen, liver, lung, small intestine and placenta.</text>
</comment>
<comment type="domain">
    <text evidence="2">The HXXXXD motif is essential for acyltransferase activity and may constitute the binding site for the phosphate moiety of the glycerol-3-phosphate.</text>
</comment>
<comment type="similarity">
    <text evidence="9">Belongs to the 1-acyl-sn-glycerol-3-phosphate acyltransferase family.</text>
</comment>
<comment type="caution">
    <text evidence="9">PubMed:16620771 does not detect acyl-CoA:lysocardiolipin acyltransferase activity.</text>
</comment>
<sequence>MHSRGREIVVLLNPWSINEAVSSYCTYFIKQDSKSFGIMVSWKGIYFILTLFWGSFFGSIFMLSPFLPLMFVNPSWYRWINNRLVATWLTLPVALLETMFGVKVIITGDAFVPGERSVIIMNHRTRMDWMFLWNCLMRYSYLRLEKICLKASLKGVPGFGWAMQAAAYIFIHRKWKDDKSHFEDMIDYFCDIHEPLQLLIFPEGTDLTENSKSRSNAFAEKNGLQKYEYVLHPRTTGFTFVVDRLREGKNLDAVHDITVAYPHNIPQSEKHLLQGDFPREIHFHVHRYPIDTLPTSKEDLQLWCHKRWEEKEERLRSFYQGEKNFYFTGQSVIPPCKSELRVLVVKLLSILYWTLFSPAMCLLIYLYSLVKWYFIITIVIFVLQERIFGGLEIIELACYRLLHKQPHLNSKKNE</sequence>
<gene>
    <name type="primary">LCLAT1</name>
    <name evidence="8" type="synonym">AGPAT8</name>
    <name type="synonym">ALCAT1</name>
    <name type="synonym">LYCAT</name>
    <name type="ORF">UNQ1849/PRO3579</name>
</gene>
<organism>
    <name type="scientific">Homo sapiens</name>
    <name type="common">Human</name>
    <dbReference type="NCBI Taxonomy" id="9606"/>
    <lineage>
        <taxon>Eukaryota</taxon>
        <taxon>Metazoa</taxon>
        <taxon>Chordata</taxon>
        <taxon>Craniata</taxon>
        <taxon>Vertebrata</taxon>
        <taxon>Euteleostomi</taxon>
        <taxon>Mammalia</taxon>
        <taxon>Eutheria</taxon>
        <taxon>Euarchontoglires</taxon>
        <taxon>Primates</taxon>
        <taxon>Haplorrhini</taxon>
        <taxon>Catarrhini</taxon>
        <taxon>Hominidae</taxon>
        <taxon>Homo</taxon>
    </lineage>
</organism>
<name>LCLT1_HUMAN</name>
<evidence type="ECO:0000250" key="1">
    <source>
        <dbReference type="UniProtKB" id="Q3UN02"/>
    </source>
</evidence>
<evidence type="ECO:0000250" key="2">
    <source>
        <dbReference type="UniProtKB" id="Q9D517"/>
    </source>
</evidence>
<evidence type="ECO:0000255" key="3"/>
<evidence type="ECO:0000269" key="4">
    <source>
    </source>
</evidence>
<evidence type="ECO:0000269" key="5">
    <source>
    </source>
</evidence>
<evidence type="ECO:0000303" key="6">
    <source>
    </source>
</evidence>
<evidence type="ECO:0000303" key="7">
    <source>
    </source>
</evidence>
<evidence type="ECO:0000303" key="8">
    <source>
    </source>
</evidence>
<evidence type="ECO:0000305" key="9"/>
<evidence type="ECO:0000305" key="10">
    <source>
    </source>
</evidence>
<evidence type="ECO:0000305" key="11">
    <source>
    </source>
</evidence>
<evidence type="ECO:0007744" key="12">
    <source>
    </source>
</evidence>
<reference key="1">
    <citation type="journal article" date="2003" name="Genome Res.">
        <title>The secreted protein discovery initiative (SPDI), a large-scale effort to identify novel human secreted and transmembrane proteins: a bioinformatics assessment.</title>
        <authorList>
            <person name="Clark H.F."/>
            <person name="Gurney A.L."/>
            <person name="Abaya E."/>
            <person name="Baker K."/>
            <person name="Baldwin D.T."/>
            <person name="Brush J."/>
            <person name="Chen J."/>
            <person name="Chow B."/>
            <person name="Chui C."/>
            <person name="Crowley C."/>
            <person name="Currell B."/>
            <person name="Deuel B."/>
            <person name="Dowd P."/>
            <person name="Eaton D."/>
            <person name="Foster J.S."/>
            <person name="Grimaldi C."/>
            <person name="Gu Q."/>
            <person name="Hass P.E."/>
            <person name="Heldens S."/>
            <person name="Huang A."/>
            <person name="Kim H.S."/>
            <person name="Klimowski L."/>
            <person name="Jin Y."/>
            <person name="Johnson S."/>
            <person name="Lee J."/>
            <person name="Lewis L."/>
            <person name="Liao D."/>
            <person name="Mark M.R."/>
            <person name="Robbie E."/>
            <person name="Sanchez C."/>
            <person name="Schoenfeld J."/>
            <person name="Seshagiri S."/>
            <person name="Simmons L."/>
            <person name="Singh J."/>
            <person name="Smith V."/>
            <person name="Stinson J."/>
            <person name="Vagts A."/>
            <person name="Vandlen R.L."/>
            <person name="Watanabe C."/>
            <person name="Wieand D."/>
            <person name="Woods K."/>
            <person name="Xie M.-H."/>
            <person name="Yansura D.G."/>
            <person name="Yi S."/>
            <person name="Yu G."/>
            <person name="Yuan J."/>
            <person name="Zhang M."/>
            <person name="Zhang Z."/>
            <person name="Goddard A.D."/>
            <person name="Wood W.I."/>
            <person name="Godowski P.J."/>
            <person name="Gray A.M."/>
        </authorList>
    </citation>
    <scope>NUCLEOTIDE SEQUENCE [LARGE SCALE MRNA] (ISOFORM 1)</scope>
</reference>
<reference key="2">
    <citation type="journal article" date="2004" name="Nat. Genet.">
        <title>Complete sequencing and characterization of 21,243 full-length human cDNAs.</title>
        <authorList>
            <person name="Ota T."/>
            <person name="Suzuki Y."/>
            <person name="Nishikawa T."/>
            <person name="Otsuki T."/>
            <person name="Sugiyama T."/>
            <person name="Irie R."/>
            <person name="Wakamatsu A."/>
            <person name="Hayashi K."/>
            <person name="Sato H."/>
            <person name="Nagai K."/>
            <person name="Kimura K."/>
            <person name="Makita H."/>
            <person name="Sekine M."/>
            <person name="Obayashi M."/>
            <person name="Nishi T."/>
            <person name="Shibahara T."/>
            <person name="Tanaka T."/>
            <person name="Ishii S."/>
            <person name="Yamamoto J."/>
            <person name="Saito K."/>
            <person name="Kawai Y."/>
            <person name="Isono Y."/>
            <person name="Nakamura Y."/>
            <person name="Nagahari K."/>
            <person name="Murakami K."/>
            <person name="Yasuda T."/>
            <person name="Iwayanagi T."/>
            <person name="Wagatsuma M."/>
            <person name="Shiratori A."/>
            <person name="Sudo H."/>
            <person name="Hosoiri T."/>
            <person name="Kaku Y."/>
            <person name="Kodaira H."/>
            <person name="Kondo H."/>
            <person name="Sugawara M."/>
            <person name="Takahashi M."/>
            <person name="Kanda K."/>
            <person name="Yokoi T."/>
            <person name="Furuya T."/>
            <person name="Kikkawa E."/>
            <person name="Omura Y."/>
            <person name="Abe K."/>
            <person name="Kamihara K."/>
            <person name="Katsuta N."/>
            <person name="Sato K."/>
            <person name="Tanikawa M."/>
            <person name="Yamazaki M."/>
            <person name="Ninomiya K."/>
            <person name="Ishibashi T."/>
            <person name="Yamashita H."/>
            <person name="Murakawa K."/>
            <person name="Fujimori K."/>
            <person name="Tanai H."/>
            <person name="Kimata M."/>
            <person name="Watanabe M."/>
            <person name="Hiraoka S."/>
            <person name="Chiba Y."/>
            <person name="Ishida S."/>
            <person name="Ono Y."/>
            <person name="Takiguchi S."/>
            <person name="Watanabe S."/>
            <person name="Yosida M."/>
            <person name="Hotuta T."/>
            <person name="Kusano J."/>
            <person name="Kanehori K."/>
            <person name="Takahashi-Fujii A."/>
            <person name="Hara H."/>
            <person name="Tanase T.-O."/>
            <person name="Nomura Y."/>
            <person name="Togiya S."/>
            <person name="Komai F."/>
            <person name="Hara R."/>
            <person name="Takeuchi K."/>
            <person name="Arita M."/>
            <person name="Imose N."/>
            <person name="Musashino K."/>
            <person name="Yuuki H."/>
            <person name="Oshima A."/>
            <person name="Sasaki N."/>
            <person name="Aotsuka S."/>
            <person name="Yoshikawa Y."/>
            <person name="Matsunawa H."/>
            <person name="Ichihara T."/>
            <person name="Shiohata N."/>
            <person name="Sano S."/>
            <person name="Moriya S."/>
            <person name="Momiyama H."/>
            <person name="Satoh N."/>
            <person name="Takami S."/>
            <person name="Terashima Y."/>
            <person name="Suzuki O."/>
            <person name="Nakagawa S."/>
            <person name="Senoh A."/>
            <person name="Mizoguchi H."/>
            <person name="Goto Y."/>
            <person name="Shimizu F."/>
            <person name="Wakebe H."/>
            <person name="Hishigaki H."/>
            <person name="Watanabe T."/>
            <person name="Sugiyama A."/>
            <person name="Takemoto M."/>
            <person name="Kawakami B."/>
            <person name="Yamazaki M."/>
            <person name="Watanabe K."/>
            <person name="Kumagai A."/>
            <person name="Itakura S."/>
            <person name="Fukuzumi Y."/>
            <person name="Fujimori Y."/>
            <person name="Komiyama M."/>
            <person name="Tashiro H."/>
            <person name="Tanigami A."/>
            <person name="Fujiwara T."/>
            <person name="Ono T."/>
            <person name="Yamada K."/>
            <person name="Fujii Y."/>
            <person name="Ozaki K."/>
            <person name="Hirao M."/>
            <person name="Ohmori Y."/>
            <person name="Kawabata A."/>
            <person name="Hikiji T."/>
            <person name="Kobatake N."/>
            <person name="Inagaki H."/>
            <person name="Ikema Y."/>
            <person name="Okamoto S."/>
            <person name="Okitani R."/>
            <person name="Kawakami T."/>
            <person name="Noguchi S."/>
            <person name="Itoh T."/>
            <person name="Shigeta K."/>
            <person name="Senba T."/>
            <person name="Matsumura K."/>
            <person name="Nakajima Y."/>
            <person name="Mizuno T."/>
            <person name="Morinaga M."/>
            <person name="Sasaki M."/>
            <person name="Togashi T."/>
            <person name="Oyama M."/>
            <person name="Hata H."/>
            <person name="Watanabe M."/>
            <person name="Komatsu T."/>
            <person name="Mizushima-Sugano J."/>
            <person name="Satoh T."/>
            <person name="Shirai Y."/>
            <person name="Takahashi Y."/>
            <person name="Nakagawa K."/>
            <person name="Okumura K."/>
            <person name="Nagase T."/>
            <person name="Nomura N."/>
            <person name="Kikuchi H."/>
            <person name="Masuho Y."/>
            <person name="Yamashita R."/>
            <person name="Nakai K."/>
            <person name="Yada T."/>
            <person name="Nakamura Y."/>
            <person name="Ohara O."/>
            <person name="Isogai T."/>
            <person name="Sugano S."/>
        </authorList>
    </citation>
    <scope>NUCLEOTIDE SEQUENCE [LARGE SCALE MRNA] (ISOFORM 2)</scope>
    <source>
        <tissue>Tongue</tissue>
    </source>
</reference>
<reference key="3">
    <citation type="journal article" date="2005" name="Nature">
        <title>Generation and annotation of the DNA sequences of human chromosomes 2 and 4.</title>
        <authorList>
            <person name="Hillier L.W."/>
            <person name="Graves T.A."/>
            <person name="Fulton R.S."/>
            <person name="Fulton L.A."/>
            <person name="Pepin K.H."/>
            <person name="Minx P."/>
            <person name="Wagner-McPherson C."/>
            <person name="Layman D."/>
            <person name="Wylie K."/>
            <person name="Sekhon M."/>
            <person name="Becker M.C."/>
            <person name="Fewell G.A."/>
            <person name="Delehaunty K.D."/>
            <person name="Miner T.L."/>
            <person name="Nash W.E."/>
            <person name="Kremitzki C."/>
            <person name="Oddy L."/>
            <person name="Du H."/>
            <person name="Sun H."/>
            <person name="Bradshaw-Cordum H."/>
            <person name="Ali J."/>
            <person name="Carter J."/>
            <person name="Cordes M."/>
            <person name="Harris A."/>
            <person name="Isak A."/>
            <person name="van Brunt A."/>
            <person name="Nguyen C."/>
            <person name="Du F."/>
            <person name="Courtney L."/>
            <person name="Kalicki J."/>
            <person name="Ozersky P."/>
            <person name="Abbott S."/>
            <person name="Armstrong J."/>
            <person name="Belter E.A."/>
            <person name="Caruso L."/>
            <person name="Cedroni M."/>
            <person name="Cotton M."/>
            <person name="Davidson T."/>
            <person name="Desai A."/>
            <person name="Elliott G."/>
            <person name="Erb T."/>
            <person name="Fronick C."/>
            <person name="Gaige T."/>
            <person name="Haakenson W."/>
            <person name="Haglund K."/>
            <person name="Holmes A."/>
            <person name="Harkins R."/>
            <person name="Kim K."/>
            <person name="Kruchowski S.S."/>
            <person name="Strong C.M."/>
            <person name="Grewal N."/>
            <person name="Goyea E."/>
            <person name="Hou S."/>
            <person name="Levy A."/>
            <person name="Martinka S."/>
            <person name="Mead K."/>
            <person name="McLellan M.D."/>
            <person name="Meyer R."/>
            <person name="Randall-Maher J."/>
            <person name="Tomlinson C."/>
            <person name="Dauphin-Kohlberg S."/>
            <person name="Kozlowicz-Reilly A."/>
            <person name="Shah N."/>
            <person name="Swearengen-Shahid S."/>
            <person name="Snider J."/>
            <person name="Strong J.T."/>
            <person name="Thompson J."/>
            <person name="Yoakum M."/>
            <person name="Leonard S."/>
            <person name="Pearman C."/>
            <person name="Trani L."/>
            <person name="Radionenko M."/>
            <person name="Waligorski J.E."/>
            <person name="Wang C."/>
            <person name="Rock S.M."/>
            <person name="Tin-Wollam A.-M."/>
            <person name="Maupin R."/>
            <person name="Latreille P."/>
            <person name="Wendl M.C."/>
            <person name="Yang S.-P."/>
            <person name="Pohl C."/>
            <person name="Wallis J.W."/>
            <person name="Spieth J."/>
            <person name="Bieri T.A."/>
            <person name="Berkowicz N."/>
            <person name="Nelson J.O."/>
            <person name="Osborne J."/>
            <person name="Ding L."/>
            <person name="Meyer R."/>
            <person name="Sabo A."/>
            <person name="Shotland Y."/>
            <person name="Sinha P."/>
            <person name="Wohldmann P.E."/>
            <person name="Cook L.L."/>
            <person name="Hickenbotham M.T."/>
            <person name="Eldred J."/>
            <person name="Williams D."/>
            <person name="Jones T.A."/>
            <person name="She X."/>
            <person name="Ciccarelli F.D."/>
            <person name="Izaurralde E."/>
            <person name="Taylor J."/>
            <person name="Schmutz J."/>
            <person name="Myers R.M."/>
            <person name="Cox D.R."/>
            <person name="Huang X."/>
            <person name="McPherson J.D."/>
            <person name="Mardis E.R."/>
            <person name="Clifton S.W."/>
            <person name="Warren W.C."/>
            <person name="Chinwalla A.T."/>
            <person name="Eddy S.R."/>
            <person name="Marra M.A."/>
            <person name="Ovcharenko I."/>
            <person name="Furey T.S."/>
            <person name="Miller W."/>
            <person name="Eichler E.E."/>
            <person name="Bork P."/>
            <person name="Suyama M."/>
            <person name="Torrents D."/>
            <person name="Waterston R.H."/>
            <person name="Wilson R.K."/>
        </authorList>
    </citation>
    <scope>NUCLEOTIDE SEQUENCE [LARGE SCALE GENOMIC DNA]</scope>
</reference>
<reference key="4">
    <citation type="journal article" date="2004" name="Genome Res.">
        <title>The status, quality, and expansion of the NIH full-length cDNA project: the Mammalian Gene Collection (MGC).</title>
        <authorList>
            <consortium name="The MGC Project Team"/>
        </authorList>
    </citation>
    <scope>NUCLEOTIDE SEQUENCE [LARGE SCALE MRNA] (ISOFORM 3)</scope>
</reference>
<reference key="5">
    <citation type="journal article" date="2006" name="Arch. Biochem. Biophys.">
        <title>Functional characterization of human 1-acylglycerol-3-phosphate acyltransferase isoform 8: cloning, tissue distribution, gene structure, and enzymatic activity.</title>
        <authorList>
            <person name="Agarwal A.K."/>
            <person name="Barnes R.I."/>
            <person name="Garg A."/>
        </authorList>
    </citation>
    <scope>FUNCTION</scope>
    <scope>CATALYTIC ACTIVITY</scope>
    <scope>TISSUE SPECIFICITY</scope>
    <scope>MUTAGENESIS OF ASP-206</scope>
</reference>
<reference key="6">
    <citation type="journal article" date="2009" name="J. Lipid Res.">
        <title>The microsomal cardiolipin remodeling enzyme acyl-CoA lysocardiolipin acyltransferase is an acyltransferase of multiple anionic lysophospholipids.</title>
        <authorList>
            <person name="Zhao Y."/>
            <person name="Chen Y.-Q."/>
            <person name="Li S."/>
            <person name="Konrad R.J."/>
            <person name="Cao G."/>
        </authorList>
    </citation>
    <scope>FUNCTION</scope>
    <scope>CATALYTIC ACTIVITY</scope>
    <scope>BIOPHYSICOCHEMICAL PROPERTIES</scope>
    <scope>SUBCELLULAR LOCATION</scope>
    <scope>TISSUE SPECIFICITY</scope>
    <scope>MUTAGENESIS OF ASP-206 AND LEU-207</scope>
</reference>
<reference key="7">
    <citation type="journal article" date="2009" name="Science">
        <title>Lysine acetylation targets protein complexes and co-regulates major cellular functions.</title>
        <authorList>
            <person name="Choudhary C."/>
            <person name="Kumar C."/>
            <person name="Gnad F."/>
            <person name="Nielsen M.L."/>
            <person name="Rehman M."/>
            <person name="Walther T.C."/>
            <person name="Olsen J.V."/>
            <person name="Mann M."/>
        </authorList>
    </citation>
    <scope>ACETYLATION [LARGE SCALE ANALYSIS] AT LYS-221</scope>
    <scope>IDENTIFICATION BY MASS SPECTROMETRY [LARGE SCALE ANALYSIS]</scope>
</reference>
<reference key="8">
    <citation type="journal article" date="2011" name="Sci. Signal.">
        <title>System-wide temporal characterization of the proteome and phosphoproteome of human embryonic stem cell differentiation.</title>
        <authorList>
            <person name="Rigbolt K.T."/>
            <person name="Prokhorova T.A."/>
            <person name="Akimov V."/>
            <person name="Henningsen J."/>
            <person name="Johansen P.T."/>
            <person name="Kratchmarova I."/>
            <person name="Kassem M."/>
            <person name="Mann M."/>
            <person name="Olsen J.V."/>
            <person name="Blagoev B."/>
        </authorList>
    </citation>
    <scope>IDENTIFICATION BY MASS SPECTROMETRY [LARGE SCALE ANALYSIS]</scope>
</reference>
<protein>
    <recommendedName>
        <fullName>Lysocardiolipin acyltransferase 1</fullName>
        <ecNumber evidence="1">2.3.1.-</ecNumber>
    </recommendedName>
    <alternativeName>
        <fullName evidence="8">1-acylglycerol-3-phosphate O-acyltransferase 8</fullName>
        <shortName>1-AGP acyltransferase 8</shortName>
        <shortName>1-AGPAT 8</shortName>
        <ecNumber evidence="4">2.3.1.51</ecNumber>
    </alternativeName>
    <alternativeName>
        <fullName>Acyl-CoA:lysocardiolipin acyltransferase 1</fullName>
    </alternativeName>
</protein>
<keyword id="KW-0007">Acetylation</keyword>
<keyword id="KW-0012">Acyltransferase</keyword>
<keyword id="KW-0025">Alternative splicing</keyword>
<keyword id="KW-0217">Developmental protein</keyword>
<keyword id="KW-0256">Endoplasmic reticulum</keyword>
<keyword id="KW-0444">Lipid biosynthesis</keyword>
<keyword id="KW-0443">Lipid metabolism</keyword>
<keyword id="KW-0472">Membrane</keyword>
<keyword id="KW-0594">Phospholipid biosynthesis</keyword>
<keyword id="KW-1208">Phospholipid metabolism</keyword>
<keyword id="KW-1267">Proteomics identification</keyword>
<keyword id="KW-1185">Reference proteome</keyword>
<keyword id="KW-0808">Transferase</keyword>
<keyword id="KW-0812">Transmembrane</keyword>
<keyword id="KW-1133">Transmembrane helix</keyword>